<organism>
    <name type="scientific">Klebsiella aerogenes</name>
    <name type="common">Enterobacter aerogenes</name>
    <dbReference type="NCBI Taxonomy" id="548"/>
    <lineage>
        <taxon>Bacteria</taxon>
        <taxon>Pseudomonadati</taxon>
        <taxon>Pseudomonadota</taxon>
        <taxon>Gammaproteobacteria</taxon>
        <taxon>Enterobacterales</taxon>
        <taxon>Enterobacteriaceae</taxon>
        <taxon>Klebsiella/Raoultella group</taxon>
        <taxon>Klebsiella</taxon>
    </lineage>
</organism>
<protein>
    <recommendedName>
        <fullName>Urease accessory protein UreE</fullName>
    </recommendedName>
</protein>
<reference key="1">
    <citation type="journal article" date="1990" name="J. Bacteriol.">
        <title>Sequence of the Klebsiella aerogenes urease genes and evidence for accessory proteins facilitating nickel incorporation.</title>
        <authorList>
            <person name="Mulrooney S.B."/>
            <person name="Hausinger R.P."/>
        </authorList>
    </citation>
    <scope>NUCLEOTIDE SEQUENCE [GENOMIC DNA]</scope>
    <source>
        <strain>CG253</strain>
    </source>
</reference>
<reference key="2">
    <citation type="journal article" date="1992" name="J. Bacteriol.">
        <title>Klebsiella aerogenes urease gene cluster: sequence of ureD and demonstration that four accessory genes (ureD, ureE, ureF, and ureG) are involved in nickel metallocenter biosynthesis.</title>
        <authorList>
            <person name="Lee M.H."/>
            <person name="Mulrooney S.B."/>
            <person name="Renner M.J."/>
            <person name="Markowicz Y."/>
            <person name="Hausinger R.P."/>
        </authorList>
    </citation>
    <scope>PROTEIN SEQUENCE OF 1-5</scope>
    <scope>DISRUPTION PHENOTYPE</scope>
</reference>
<reference key="3">
    <citation type="journal article" date="1993" name="Protein Sci.">
        <title>Purification and characterization of Klebsiella aerogenes UreE protein: a nickel-binding protein that functions in urease metallocenter assembly.</title>
        <authorList>
            <person name="Lee M.H."/>
            <person name="Pankratz H.S."/>
            <person name="Wang S."/>
            <person name="Scott R.A."/>
            <person name="Finnegan M.G."/>
            <person name="Johnson M.K."/>
            <person name="Ippolito J.A."/>
            <person name="Christianson D.W."/>
            <person name="Hausinger R.P."/>
        </authorList>
    </citation>
    <scope>CHARACTERIZATION</scope>
</reference>
<reference key="4">
    <citation type="journal article" date="2006" name="J. Bacteriol.">
        <title>The UreEF fusion protein provides a soluble and functional form of the UreF urease accessory protein.</title>
        <authorList>
            <person name="Kim J.K."/>
            <person name="Mulrooney S.B."/>
            <person name="Hausinger R.P."/>
        </authorList>
    </citation>
    <scope>UREE-UREF FUSION PROTEIN</scope>
</reference>
<reference key="5">
    <citation type="journal article" date="2001" name="J. Biol. Chem.">
        <title>Crystal structure of Klebsiella aerogenes UreE, a nickel-binding metallochaperone for urease activation.</title>
        <authorList>
            <person name="Song H.K."/>
            <person name="Mulrooney S.B."/>
            <person name="Huber R."/>
            <person name="Hausinger R.P."/>
        </authorList>
    </citation>
    <scope>X-RAY CRYSTALLOGRAPHY (1.5 ANGSTROMS) OF 1-143</scope>
</reference>
<gene>
    <name type="primary">ureE</name>
</gene>
<evidence type="ECO:0000269" key="1">
    <source>
    </source>
</evidence>
<evidence type="ECO:0000305" key="2"/>
<evidence type="ECO:0007829" key="3">
    <source>
        <dbReference type="PDB" id="1GMU"/>
    </source>
</evidence>
<evidence type="ECO:0007829" key="4">
    <source>
        <dbReference type="PDB" id="1GMV"/>
    </source>
</evidence>
<evidence type="ECO:0007829" key="5">
    <source>
        <dbReference type="PDB" id="1GMW"/>
    </source>
</evidence>
<accession>P18317</accession>
<name>UREE_KLEAE</name>
<comment type="function">
    <text>Involved in urease metallocenter assembly. Binds about 6 nickel ions per homodimer. Probably functions as a nickel donor during metallocenter assembly. Its function can be bypassed in vitro in the presence of high nickel concentrations.</text>
</comment>
<comment type="cofactor">
    <cofactor>
        <name>Ni(2+)</name>
        <dbReference type="ChEBI" id="CHEBI:49786"/>
    </cofactor>
    <text>Binds 2 Ni ions per subunit.</text>
</comment>
<comment type="subunit">
    <text>Homodimer. Dimerization is prevented in the UreEF fusion protein.</text>
</comment>
<comment type="subcellular location">
    <subcellularLocation>
        <location>Cytoplasm</location>
    </subcellularLocation>
</comment>
<comment type="disruption phenotype">
    <text evidence="1">Disrupting the ure1 operon causes loss of urease activity.</text>
</comment>
<comment type="miscellaneous">
    <text>The artificial UreEF fusion protein binds nickel but is not able to transfer it to the apoprotein, thus its function is impaired. UreF function seems largely unaltered in the fusion.</text>
</comment>
<comment type="similarity">
    <text evidence="2">Belongs to the UreE family.</text>
</comment>
<keyword id="KW-0002">3D-structure</keyword>
<keyword id="KW-0143">Chaperone</keyword>
<keyword id="KW-0963">Cytoplasm</keyword>
<keyword id="KW-0903">Direct protein sequencing</keyword>
<keyword id="KW-0479">Metal-binding</keyword>
<keyword id="KW-0533">Nickel</keyword>
<keyword id="KW-0996">Nickel insertion</keyword>
<proteinExistence type="evidence at protein level"/>
<dbReference type="EMBL" id="M36068">
    <property type="protein sequence ID" value="AAA25152.1"/>
    <property type="molecule type" value="Genomic_DNA"/>
</dbReference>
<dbReference type="PDB" id="1GMU">
    <property type="method" value="X-ray"/>
    <property type="resolution" value="1.50 A"/>
    <property type="chains" value="A/B/C/D=1-143"/>
</dbReference>
<dbReference type="PDB" id="1GMV">
    <property type="method" value="X-ray"/>
    <property type="resolution" value="2.80 A"/>
    <property type="chains" value="A/B=1-143"/>
</dbReference>
<dbReference type="PDB" id="1GMW">
    <property type="method" value="X-ray"/>
    <property type="resolution" value="1.50 A"/>
    <property type="chains" value="A/B/C/D=1-143"/>
</dbReference>
<dbReference type="PDBsum" id="1GMU"/>
<dbReference type="PDBsum" id="1GMV"/>
<dbReference type="PDBsum" id="1GMW"/>
<dbReference type="SMR" id="P18317"/>
<dbReference type="IntAct" id="P18317">
    <property type="interactions" value="1"/>
</dbReference>
<dbReference type="EvolutionaryTrace" id="P18317"/>
<dbReference type="GO" id="GO:0005737">
    <property type="term" value="C:cytoplasm"/>
    <property type="evidence" value="ECO:0007669"/>
    <property type="project" value="UniProtKB-SubCell"/>
</dbReference>
<dbReference type="GO" id="GO:0016151">
    <property type="term" value="F:nickel cation binding"/>
    <property type="evidence" value="ECO:0007669"/>
    <property type="project" value="UniProtKB-UniRule"/>
</dbReference>
<dbReference type="GO" id="GO:0051082">
    <property type="term" value="F:unfolded protein binding"/>
    <property type="evidence" value="ECO:0007669"/>
    <property type="project" value="UniProtKB-UniRule"/>
</dbReference>
<dbReference type="GO" id="GO:0006457">
    <property type="term" value="P:protein folding"/>
    <property type="evidence" value="ECO:0007669"/>
    <property type="project" value="InterPro"/>
</dbReference>
<dbReference type="GO" id="GO:0065003">
    <property type="term" value="P:protein-containing complex assembly"/>
    <property type="evidence" value="ECO:0007669"/>
    <property type="project" value="InterPro"/>
</dbReference>
<dbReference type="GO" id="GO:0019627">
    <property type="term" value="P:urea metabolic process"/>
    <property type="evidence" value="ECO:0007669"/>
    <property type="project" value="InterPro"/>
</dbReference>
<dbReference type="CDD" id="cd00571">
    <property type="entry name" value="UreE"/>
    <property type="match status" value="1"/>
</dbReference>
<dbReference type="Gene3D" id="2.60.260.20">
    <property type="entry name" value="Urease metallochaperone UreE, N-terminal domain"/>
    <property type="match status" value="1"/>
</dbReference>
<dbReference type="Gene3D" id="3.30.70.790">
    <property type="entry name" value="UreE, C-terminal domain"/>
    <property type="match status" value="1"/>
</dbReference>
<dbReference type="HAMAP" id="MF_00822">
    <property type="entry name" value="UreE"/>
    <property type="match status" value="1"/>
</dbReference>
<dbReference type="InterPro" id="IPR012406">
    <property type="entry name" value="UreE"/>
</dbReference>
<dbReference type="InterPro" id="IPR007864">
    <property type="entry name" value="UreE_C_dom"/>
</dbReference>
<dbReference type="InterPro" id="IPR004029">
    <property type="entry name" value="UreE_N"/>
</dbReference>
<dbReference type="InterPro" id="IPR036118">
    <property type="entry name" value="UreE_N_sf"/>
</dbReference>
<dbReference type="NCBIfam" id="NF009751">
    <property type="entry name" value="PRK13261.1-1"/>
    <property type="match status" value="1"/>
</dbReference>
<dbReference type="Pfam" id="PF05194">
    <property type="entry name" value="UreE_C"/>
    <property type="match status" value="1"/>
</dbReference>
<dbReference type="Pfam" id="PF02814">
    <property type="entry name" value="UreE_N"/>
    <property type="match status" value="1"/>
</dbReference>
<dbReference type="PIRSF" id="PIRSF036402">
    <property type="entry name" value="Ureas_acces_UreE"/>
    <property type="match status" value="1"/>
</dbReference>
<dbReference type="SMART" id="SM00988">
    <property type="entry name" value="UreE_N"/>
    <property type="match status" value="1"/>
</dbReference>
<dbReference type="SUPFAM" id="SSF69737">
    <property type="entry name" value="Urease metallochaperone UreE, C-terminal domain"/>
    <property type="match status" value="1"/>
</dbReference>
<dbReference type="SUPFAM" id="SSF69287">
    <property type="entry name" value="Urease metallochaperone UreE, N-terminal domain"/>
    <property type="match status" value="1"/>
</dbReference>
<sequence length="158" mass="17559">MLYLTQRLEIPAAATASVTLPIDVRVKSRVKVTLNDGRDAGLLLPRGLLLRGGDVLSNEEGTEFVQVIAADEEVSVVRCDDPFMLAKACYHLGNRHVPLQIMPGELRYHHDHVLDDMLRQFGLTVTFGQLPFEPEAGAYASESHGHHHAHHDHHAHSH</sequence>
<feature type="chain" id="PRO_0000067635" description="Urease accessory protein UreE">
    <location>
        <begin position="1"/>
        <end position="158"/>
    </location>
</feature>
<feature type="binding site">
    <location>
        <position position="96"/>
    </location>
    <ligand>
        <name>Ni(2+)</name>
        <dbReference type="ChEBI" id="CHEBI:49786"/>
        <label>1</label>
    </ligand>
</feature>
<feature type="binding site">
    <location>
        <position position="110"/>
    </location>
    <ligand>
        <name>Ni(2+)</name>
        <dbReference type="ChEBI" id="CHEBI:49786"/>
        <label>2</label>
    </ligand>
</feature>
<feature type="binding site">
    <location>
        <position position="112"/>
    </location>
    <ligand>
        <name>Ni(2+)</name>
        <dbReference type="ChEBI" id="CHEBI:49786"/>
        <label>2</label>
    </ligand>
</feature>
<feature type="strand" evidence="3">
    <location>
        <begin position="2"/>
        <end position="4"/>
    </location>
</feature>
<feature type="strand" evidence="3">
    <location>
        <begin position="15"/>
        <end position="20"/>
    </location>
</feature>
<feature type="helix" evidence="3">
    <location>
        <begin position="22"/>
        <end position="25"/>
    </location>
</feature>
<feature type="strand" evidence="3">
    <location>
        <begin position="28"/>
        <end position="33"/>
    </location>
</feature>
<feature type="strand" evidence="4">
    <location>
        <begin position="35"/>
        <end position="37"/>
    </location>
</feature>
<feature type="strand" evidence="3">
    <location>
        <begin position="39"/>
        <end position="43"/>
    </location>
</feature>
<feature type="strand" evidence="3">
    <location>
        <begin position="55"/>
        <end position="57"/>
    </location>
</feature>
<feature type="strand" evidence="5">
    <location>
        <begin position="59"/>
        <end position="62"/>
    </location>
</feature>
<feature type="strand" evidence="3">
    <location>
        <begin position="64"/>
        <end position="69"/>
    </location>
</feature>
<feature type="strand" evidence="3">
    <location>
        <begin position="71"/>
        <end position="78"/>
    </location>
</feature>
<feature type="helix" evidence="3">
    <location>
        <begin position="82"/>
        <end position="94"/>
    </location>
</feature>
<feature type="strand" evidence="3">
    <location>
        <begin position="100"/>
        <end position="102"/>
    </location>
</feature>
<feature type="strand" evidence="3">
    <location>
        <begin position="105"/>
        <end position="109"/>
    </location>
</feature>
<feature type="helix" evidence="3">
    <location>
        <begin position="112"/>
        <end position="119"/>
    </location>
</feature>
<feature type="turn" evidence="3">
    <location>
        <begin position="120"/>
        <end position="122"/>
    </location>
</feature>
<feature type="strand" evidence="3">
    <location>
        <begin position="125"/>
        <end position="131"/>
    </location>
</feature>